<protein>
    <recommendedName>
        <fullName evidence="1">Elongation factor G</fullName>
        <shortName evidence="1">EF-G</shortName>
    </recommendedName>
</protein>
<reference key="1">
    <citation type="journal article" date="2008" name="Mol. Biol. Evol.">
        <title>Genome evolution of Wolbachia strain wPip from the Culex pipiens group.</title>
        <authorList>
            <person name="Klasson L."/>
            <person name="Walker T."/>
            <person name="Sebaihia M."/>
            <person name="Sanders M.J."/>
            <person name="Quail M.A."/>
            <person name="Lord A."/>
            <person name="Sanders S."/>
            <person name="Earl J."/>
            <person name="O'Neill S.L."/>
            <person name="Thomson N."/>
            <person name="Sinkins S.P."/>
            <person name="Parkhill J."/>
        </authorList>
    </citation>
    <scope>NUCLEOTIDE SEQUENCE [LARGE SCALE GENOMIC DNA]</scope>
    <source>
        <strain>wPip</strain>
    </source>
</reference>
<evidence type="ECO:0000255" key="1">
    <source>
        <dbReference type="HAMAP-Rule" id="MF_00054"/>
    </source>
</evidence>
<feature type="chain" id="PRO_1000091779" description="Elongation factor G">
    <location>
        <begin position="1"/>
        <end position="691"/>
    </location>
</feature>
<feature type="domain" description="tr-type G">
    <location>
        <begin position="6"/>
        <end position="281"/>
    </location>
</feature>
<feature type="binding site" evidence="1">
    <location>
        <begin position="15"/>
        <end position="22"/>
    </location>
    <ligand>
        <name>GTP</name>
        <dbReference type="ChEBI" id="CHEBI:37565"/>
    </ligand>
</feature>
<feature type="binding site" evidence="1">
    <location>
        <begin position="79"/>
        <end position="83"/>
    </location>
    <ligand>
        <name>GTP</name>
        <dbReference type="ChEBI" id="CHEBI:37565"/>
    </ligand>
</feature>
<feature type="binding site" evidence="1">
    <location>
        <begin position="133"/>
        <end position="136"/>
    </location>
    <ligand>
        <name>GTP</name>
        <dbReference type="ChEBI" id="CHEBI:37565"/>
    </ligand>
</feature>
<name>EFG_WOLPP</name>
<gene>
    <name evidence="1" type="primary">fusA</name>
    <name type="ordered locus">WP0562</name>
</gene>
<dbReference type="EMBL" id="AM999887">
    <property type="protein sequence ID" value="CAQ54670.1"/>
    <property type="molecule type" value="Genomic_DNA"/>
</dbReference>
<dbReference type="RefSeq" id="WP_010406835.1">
    <property type="nucleotide sequence ID" value="NC_010981.1"/>
</dbReference>
<dbReference type="SMR" id="B3CLA3"/>
<dbReference type="KEGG" id="wpi:WP0562"/>
<dbReference type="eggNOG" id="COG0480">
    <property type="taxonomic scope" value="Bacteria"/>
</dbReference>
<dbReference type="HOGENOM" id="CLU_002794_4_1_5"/>
<dbReference type="Proteomes" id="UP000008814">
    <property type="component" value="Chromosome"/>
</dbReference>
<dbReference type="GO" id="GO:0005737">
    <property type="term" value="C:cytoplasm"/>
    <property type="evidence" value="ECO:0007669"/>
    <property type="project" value="UniProtKB-SubCell"/>
</dbReference>
<dbReference type="GO" id="GO:0005525">
    <property type="term" value="F:GTP binding"/>
    <property type="evidence" value="ECO:0007669"/>
    <property type="project" value="UniProtKB-UniRule"/>
</dbReference>
<dbReference type="GO" id="GO:0003924">
    <property type="term" value="F:GTPase activity"/>
    <property type="evidence" value="ECO:0007669"/>
    <property type="project" value="InterPro"/>
</dbReference>
<dbReference type="GO" id="GO:0097216">
    <property type="term" value="F:guanosine tetraphosphate binding"/>
    <property type="evidence" value="ECO:0007669"/>
    <property type="project" value="UniProtKB-ARBA"/>
</dbReference>
<dbReference type="GO" id="GO:0003746">
    <property type="term" value="F:translation elongation factor activity"/>
    <property type="evidence" value="ECO:0007669"/>
    <property type="project" value="UniProtKB-UniRule"/>
</dbReference>
<dbReference type="GO" id="GO:0032790">
    <property type="term" value="P:ribosome disassembly"/>
    <property type="evidence" value="ECO:0007669"/>
    <property type="project" value="TreeGrafter"/>
</dbReference>
<dbReference type="CDD" id="cd01886">
    <property type="entry name" value="EF-G"/>
    <property type="match status" value="1"/>
</dbReference>
<dbReference type="CDD" id="cd16262">
    <property type="entry name" value="EFG_III"/>
    <property type="match status" value="1"/>
</dbReference>
<dbReference type="CDD" id="cd01434">
    <property type="entry name" value="EFG_mtEFG1_IV"/>
    <property type="match status" value="1"/>
</dbReference>
<dbReference type="CDD" id="cd03713">
    <property type="entry name" value="EFG_mtEFG_C"/>
    <property type="match status" value="1"/>
</dbReference>
<dbReference type="CDD" id="cd04088">
    <property type="entry name" value="EFG_mtEFG_II"/>
    <property type="match status" value="1"/>
</dbReference>
<dbReference type="FunFam" id="2.40.30.10:FF:000006">
    <property type="entry name" value="Elongation factor G"/>
    <property type="match status" value="1"/>
</dbReference>
<dbReference type="FunFam" id="3.30.230.10:FF:000003">
    <property type="entry name" value="Elongation factor G"/>
    <property type="match status" value="1"/>
</dbReference>
<dbReference type="FunFam" id="3.30.70.240:FF:000001">
    <property type="entry name" value="Elongation factor G"/>
    <property type="match status" value="1"/>
</dbReference>
<dbReference type="FunFam" id="3.30.70.870:FF:000001">
    <property type="entry name" value="Elongation factor G"/>
    <property type="match status" value="1"/>
</dbReference>
<dbReference type="FunFam" id="3.40.50.300:FF:000029">
    <property type="entry name" value="Elongation factor G"/>
    <property type="match status" value="1"/>
</dbReference>
<dbReference type="Gene3D" id="3.30.230.10">
    <property type="match status" value="1"/>
</dbReference>
<dbReference type="Gene3D" id="3.30.70.240">
    <property type="match status" value="1"/>
</dbReference>
<dbReference type="Gene3D" id="3.30.70.870">
    <property type="entry name" value="Elongation Factor G (Translational Gtpase), domain 3"/>
    <property type="match status" value="1"/>
</dbReference>
<dbReference type="Gene3D" id="3.40.50.300">
    <property type="entry name" value="P-loop containing nucleotide triphosphate hydrolases"/>
    <property type="match status" value="1"/>
</dbReference>
<dbReference type="Gene3D" id="2.40.30.10">
    <property type="entry name" value="Translation factors"/>
    <property type="match status" value="1"/>
</dbReference>
<dbReference type="HAMAP" id="MF_00054_B">
    <property type="entry name" value="EF_G_EF_2_B"/>
    <property type="match status" value="1"/>
</dbReference>
<dbReference type="InterPro" id="IPR041095">
    <property type="entry name" value="EFG_II"/>
</dbReference>
<dbReference type="InterPro" id="IPR009022">
    <property type="entry name" value="EFG_III"/>
</dbReference>
<dbReference type="InterPro" id="IPR035647">
    <property type="entry name" value="EFG_III/V"/>
</dbReference>
<dbReference type="InterPro" id="IPR047872">
    <property type="entry name" value="EFG_IV"/>
</dbReference>
<dbReference type="InterPro" id="IPR035649">
    <property type="entry name" value="EFG_V"/>
</dbReference>
<dbReference type="InterPro" id="IPR000640">
    <property type="entry name" value="EFG_V-like"/>
</dbReference>
<dbReference type="InterPro" id="IPR004161">
    <property type="entry name" value="EFTu-like_2"/>
</dbReference>
<dbReference type="InterPro" id="IPR031157">
    <property type="entry name" value="G_TR_CS"/>
</dbReference>
<dbReference type="InterPro" id="IPR027417">
    <property type="entry name" value="P-loop_NTPase"/>
</dbReference>
<dbReference type="InterPro" id="IPR020568">
    <property type="entry name" value="Ribosomal_Su5_D2-typ_SF"/>
</dbReference>
<dbReference type="InterPro" id="IPR014721">
    <property type="entry name" value="Ribsml_uS5_D2-typ_fold_subgr"/>
</dbReference>
<dbReference type="InterPro" id="IPR005225">
    <property type="entry name" value="Small_GTP-bd"/>
</dbReference>
<dbReference type="InterPro" id="IPR000795">
    <property type="entry name" value="T_Tr_GTP-bd_dom"/>
</dbReference>
<dbReference type="InterPro" id="IPR009000">
    <property type="entry name" value="Transl_B-barrel_sf"/>
</dbReference>
<dbReference type="InterPro" id="IPR004540">
    <property type="entry name" value="Transl_elong_EFG/EF2"/>
</dbReference>
<dbReference type="InterPro" id="IPR005517">
    <property type="entry name" value="Transl_elong_EFG/EF2_IV"/>
</dbReference>
<dbReference type="NCBIfam" id="TIGR00484">
    <property type="entry name" value="EF-G"/>
    <property type="match status" value="1"/>
</dbReference>
<dbReference type="NCBIfam" id="NF009381">
    <property type="entry name" value="PRK12740.1-5"/>
    <property type="match status" value="1"/>
</dbReference>
<dbReference type="NCBIfam" id="TIGR00231">
    <property type="entry name" value="small_GTP"/>
    <property type="match status" value="1"/>
</dbReference>
<dbReference type="PANTHER" id="PTHR43261:SF1">
    <property type="entry name" value="RIBOSOME-RELEASING FACTOR 2, MITOCHONDRIAL"/>
    <property type="match status" value="1"/>
</dbReference>
<dbReference type="PANTHER" id="PTHR43261">
    <property type="entry name" value="TRANSLATION ELONGATION FACTOR G-RELATED"/>
    <property type="match status" value="1"/>
</dbReference>
<dbReference type="Pfam" id="PF00679">
    <property type="entry name" value="EFG_C"/>
    <property type="match status" value="1"/>
</dbReference>
<dbReference type="Pfam" id="PF14492">
    <property type="entry name" value="EFG_III"/>
    <property type="match status" value="1"/>
</dbReference>
<dbReference type="Pfam" id="PF03764">
    <property type="entry name" value="EFG_IV"/>
    <property type="match status" value="1"/>
</dbReference>
<dbReference type="Pfam" id="PF00009">
    <property type="entry name" value="GTP_EFTU"/>
    <property type="match status" value="1"/>
</dbReference>
<dbReference type="Pfam" id="PF03144">
    <property type="entry name" value="GTP_EFTU_D2"/>
    <property type="match status" value="1"/>
</dbReference>
<dbReference type="PRINTS" id="PR00315">
    <property type="entry name" value="ELONGATNFCT"/>
</dbReference>
<dbReference type="SMART" id="SM00838">
    <property type="entry name" value="EFG_C"/>
    <property type="match status" value="1"/>
</dbReference>
<dbReference type="SMART" id="SM00889">
    <property type="entry name" value="EFG_IV"/>
    <property type="match status" value="1"/>
</dbReference>
<dbReference type="SUPFAM" id="SSF54980">
    <property type="entry name" value="EF-G C-terminal domain-like"/>
    <property type="match status" value="2"/>
</dbReference>
<dbReference type="SUPFAM" id="SSF52540">
    <property type="entry name" value="P-loop containing nucleoside triphosphate hydrolases"/>
    <property type="match status" value="1"/>
</dbReference>
<dbReference type="SUPFAM" id="SSF54211">
    <property type="entry name" value="Ribosomal protein S5 domain 2-like"/>
    <property type="match status" value="1"/>
</dbReference>
<dbReference type="SUPFAM" id="SSF50447">
    <property type="entry name" value="Translation proteins"/>
    <property type="match status" value="1"/>
</dbReference>
<dbReference type="PROSITE" id="PS00301">
    <property type="entry name" value="G_TR_1"/>
    <property type="match status" value="1"/>
</dbReference>
<dbReference type="PROSITE" id="PS51722">
    <property type="entry name" value="G_TR_2"/>
    <property type="match status" value="1"/>
</dbReference>
<comment type="function">
    <text evidence="1">Catalyzes the GTP-dependent ribosomal translocation step during translation elongation. During this step, the ribosome changes from the pre-translocational (PRE) to the post-translocational (POST) state as the newly formed A-site-bound peptidyl-tRNA and P-site-bound deacylated tRNA move to the P and E sites, respectively. Catalyzes the coordinated movement of the two tRNA molecules, the mRNA and conformational changes in the ribosome.</text>
</comment>
<comment type="subcellular location">
    <subcellularLocation>
        <location evidence="1">Cytoplasm</location>
    </subcellularLocation>
</comment>
<comment type="similarity">
    <text evidence="1">Belongs to the TRAFAC class translation factor GTPase superfamily. Classic translation factor GTPase family. EF-G/EF-2 subfamily.</text>
</comment>
<keyword id="KW-0963">Cytoplasm</keyword>
<keyword id="KW-0251">Elongation factor</keyword>
<keyword id="KW-0342">GTP-binding</keyword>
<keyword id="KW-0547">Nucleotide-binding</keyword>
<keyword id="KW-0648">Protein biosynthesis</keyword>
<accession>B3CLA3</accession>
<organism>
    <name type="scientific">Wolbachia pipientis subsp. Culex pipiens (strain wPip)</name>
    <dbReference type="NCBI Taxonomy" id="570417"/>
    <lineage>
        <taxon>Bacteria</taxon>
        <taxon>Pseudomonadati</taxon>
        <taxon>Pseudomonadota</taxon>
        <taxon>Alphaproteobacteria</taxon>
        <taxon>Rickettsiales</taxon>
        <taxon>Anaplasmataceae</taxon>
        <taxon>Wolbachieae</taxon>
        <taxon>Wolbachia</taxon>
    </lineage>
</organism>
<proteinExistence type="inferred from homology"/>
<sequence length="691" mass="76474">MEVLISRYRNIGIMAHIDAGKTTTTERILFYTGKQNRIGEVHDGAASMDWMEQEKERGITITSAATTCFWNDHRINIIDTPGHVDFTIEVERSLRVLDGAVAVFDGVAGVEPQSETVWRQADKYNVPRICFVNKMDRIGANFYRCVDMIKTKLGASPLVIQLPIGSEKDFKGIIDLISMKAIIWQEETLGAKFSYEDIPSDLLDKAQEYRNLLLDAAAEMDDEAINTYFESNDLPIDLLKKCVRSGTIKGKFVPVLCGSAFKNKGVQSLLDGVVDFLPSPIDVDVIIGTDPKDSEKKIEIKPSEKEKFVALAFKVMTDKFVGSLTFIRIYSGKLKSKSAVLNAGKNETEGIGRMLLMHANNREDINEAKVGDIVALVGLKKTITGDTLCSSDFPILLERMEFPDPVIEIAIEPKTTSDQEKLGVALNRLVAEDPSLRMSVNAESGQTILKGMGELHLEIIIDRMKREFNVEANVGAPQVAYRETITKSVEIDYTHKKQSGGAGQFAKVKIKFEPLEPGFGFQFESKIVGGAIPKEYIPGVQNGLELIKEGGIISGFPLIDFKATLLDGAFHDVDSSPLAFELAAKGAFKEMANKAGPKMLEPIMKVEIITPEEYMGDVMGDINSRRGSVVDMLDLGNNSKIITASVPLANMFGYINVLRSISQGRAQYSMHFSCYEQVPQYVVDELKLKYN</sequence>